<reference key="1">
    <citation type="journal article" date="2008" name="BMC Genomics">
        <title>The genome of Aeromonas salmonicida subsp. salmonicida A449: insights into the evolution of a fish pathogen.</title>
        <authorList>
            <person name="Reith M.E."/>
            <person name="Singh R.K."/>
            <person name="Curtis B."/>
            <person name="Boyd J.M."/>
            <person name="Bouevitch A."/>
            <person name="Kimball J."/>
            <person name="Munholland J."/>
            <person name="Murphy C."/>
            <person name="Sarty D."/>
            <person name="Williams J."/>
            <person name="Nash J.H."/>
            <person name="Johnson S.C."/>
            <person name="Brown L.L."/>
        </authorList>
    </citation>
    <scope>NUCLEOTIDE SEQUENCE [LARGE SCALE GENOMIC DNA]</scope>
    <source>
        <strain>A449</strain>
    </source>
</reference>
<proteinExistence type="inferred from homology"/>
<dbReference type="EC" id="2.7.7.6" evidence="1"/>
<dbReference type="EMBL" id="CP000644">
    <property type="protein sequence ID" value="ABO92003.1"/>
    <property type="molecule type" value="Genomic_DNA"/>
</dbReference>
<dbReference type="RefSeq" id="WP_005307997.1">
    <property type="nucleotide sequence ID" value="NC_009348.1"/>
</dbReference>
<dbReference type="BMRB" id="A4SSY1"/>
<dbReference type="SMR" id="A4SSY1"/>
<dbReference type="STRING" id="29491.GCA_000820065_03489"/>
<dbReference type="KEGG" id="asa:ASA_4062"/>
<dbReference type="eggNOG" id="COG0202">
    <property type="taxonomic scope" value="Bacteria"/>
</dbReference>
<dbReference type="HOGENOM" id="CLU_053084_0_0_6"/>
<dbReference type="Proteomes" id="UP000000225">
    <property type="component" value="Chromosome"/>
</dbReference>
<dbReference type="GO" id="GO:0005737">
    <property type="term" value="C:cytoplasm"/>
    <property type="evidence" value="ECO:0007669"/>
    <property type="project" value="UniProtKB-ARBA"/>
</dbReference>
<dbReference type="GO" id="GO:0000428">
    <property type="term" value="C:DNA-directed RNA polymerase complex"/>
    <property type="evidence" value="ECO:0007669"/>
    <property type="project" value="UniProtKB-KW"/>
</dbReference>
<dbReference type="GO" id="GO:0003677">
    <property type="term" value="F:DNA binding"/>
    <property type="evidence" value="ECO:0007669"/>
    <property type="project" value="UniProtKB-UniRule"/>
</dbReference>
<dbReference type="GO" id="GO:0003899">
    <property type="term" value="F:DNA-directed RNA polymerase activity"/>
    <property type="evidence" value="ECO:0007669"/>
    <property type="project" value="UniProtKB-UniRule"/>
</dbReference>
<dbReference type="GO" id="GO:0046983">
    <property type="term" value="F:protein dimerization activity"/>
    <property type="evidence" value="ECO:0007669"/>
    <property type="project" value="InterPro"/>
</dbReference>
<dbReference type="GO" id="GO:0006351">
    <property type="term" value="P:DNA-templated transcription"/>
    <property type="evidence" value="ECO:0007669"/>
    <property type="project" value="UniProtKB-UniRule"/>
</dbReference>
<dbReference type="CDD" id="cd06928">
    <property type="entry name" value="RNAP_alpha_NTD"/>
    <property type="match status" value="1"/>
</dbReference>
<dbReference type="FunFam" id="1.10.150.20:FF:000001">
    <property type="entry name" value="DNA-directed RNA polymerase subunit alpha"/>
    <property type="match status" value="1"/>
</dbReference>
<dbReference type="FunFam" id="2.170.120.12:FF:000001">
    <property type="entry name" value="DNA-directed RNA polymerase subunit alpha"/>
    <property type="match status" value="1"/>
</dbReference>
<dbReference type="Gene3D" id="1.10.150.20">
    <property type="entry name" value="5' to 3' exonuclease, C-terminal subdomain"/>
    <property type="match status" value="1"/>
</dbReference>
<dbReference type="Gene3D" id="2.170.120.12">
    <property type="entry name" value="DNA-directed RNA polymerase, insert domain"/>
    <property type="match status" value="1"/>
</dbReference>
<dbReference type="Gene3D" id="3.30.1360.10">
    <property type="entry name" value="RNA polymerase, RBP11-like subunit"/>
    <property type="match status" value="1"/>
</dbReference>
<dbReference type="HAMAP" id="MF_00059">
    <property type="entry name" value="RNApol_bact_RpoA"/>
    <property type="match status" value="1"/>
</dbReference>
<dbReference type="InterPro" id="IPR011262">
    <property type="entry name" value="DNA-dir_RNA_pol_insert"/>
</dbReference>
<dbReference type="InterPro" id="IPR011263">
    <property type="entry name" value="DNA-dir_RNA_pol_RpoA/D/Rpb3"/>
</dbReference>
<dbReference type="InterPro" id="IPR011773">
    <property type="entry name" value="DNA-dir_RpoA"/>
</dbReference>
<dbReference type="InterPro" id="IPR036603">
    <property type="entry name" value="RBP11-like"/>
</dbReference>
<dbReference type="InterPro" id="IPR011260">
    <property type="entry name" value="RNAP_asu_C"/>
</dbReference>
<dbReference type="InterPro" id="IPR036643">
    <property type="entry name" value="RNApol_insert_sf"/>
</dbReference>
<dbReference type="NCBIfam" id="NF003513">
    <property type="entry name" value="PRK05182.1-2"/>
    <property type="match status" value="1"/>
</dbReference>
<dbReference type="NCBIfam" id="NF003519">
    <property type="entry name" value="PRK05182.2-5"/>
    <property type="match status" value="1"/>
</dbReference>
<dbReference type="NCBIfam" id="TIGR02027">
    <property type="entry name" value="rpoA"/>
    <property type="match status" value="1"/>
</dbReference>
<dbReference type="Pfam" id="PF01000">
    <property type="entry name" value="RNA_pol_A_bac"/>
    <property type="match status" value="1"/>
</dbReference>
<dbReference type="Pfam" id="PF03118">
    <property type="entry name" value="RNA_pol_A_CTD"/>
    <property type="match status" value="1"/>
</dbReference>
<dbReference type="Pfam" id="PF01193">
    <property type="entry name" value="RNA_pol_L"/>
    <property type="match status" value="1"/>
</dbReference>
<dbReference type="SMART" id="SM00662">
    <property type="entry name" value="RPOLD"/>
    <property type="match status" value="1"/>
</dbReference>
<dbReference type="SUPFAM" id="SSF47789">
    <property type="entry name" value="C-terminal domain of RNA polymerase alpha subunit"/>
    <property type="match status" value="1"/>
</dbReference>
<dbReference type="SUPFAM" id="SSF56553">
    <property type="entry name" value="Insert subdomain of RNA polymerase alpha subunit"/>
    <property type="match status" value="1"/>
</dbReference>
<dbReference type="SUPFAM" id="SSF55257">
    <property type="entry name" value="RBP11-like subunits of RNA polymerase"/>
    <property type="match status" value="1"/>
</dbReference>
<organism>
    <name type="scientific">Aeromonas salmonicida (strain A449)</name>
    <dbReference type="NCBI Taxonomy" id="382245"/>
    <lineage>
        <taxon>Bacteria</taxon>
        <taxon>Pseudomonadati</taxon>
        <taxon>Pseudomonadota</taxon>
        <taxon>Gammaproteobacteria</taxon>
        <taxon>Aeromonadales</taxon>
        <taxon>Aeromonadaceae</taxon>
        <taxon>Aeromonas</taxon>
    </lineage>
</organism>
<feature type="chain" id="PRO_0000296778" description="DNA-directed RNA polymerase subunit alpha">
    <location>
        <begin position="1"/>
        <end position="329"/>
    </location>
</feature>
<feature type="region of interest" description="Alpha N-terminal domain (alpha-NTD)" evidence="1">
    <location>
        <begin position="1"/>
        <end position="235"/>
    </location>
</feature>
<feature type="region of interest" description="Alpha C-terminal domain (alpha-CTD)" evidence="1">
    <location>
        <begin position="249"/>
        <end position="329"/>
    </location>
</feature>
<accession>A4SSY1</accession>
<evidence type="ECO:0000255" key="1">
    <source>
        <dbReference type="HAMAP-Rule" id="MF_00059"/>
    </source>
</evidence>
<keyword id="KW-0240">DNA-directed RNA polymerase</keyword>
<keyword id="KW-0548">Nucleotidyltransferase</keyword>
<keyword id="KW-0804">Transcription</keyword>
<keyword id="KW-0808">Transferase</keyword>
<sequence>MLGSVTDFLKPRLVDIEQVSPTHAKVTLEPLERGFGHTLGNALRRILLSSMPGCAVTEVEIDGVLHEYSSKEGVQEDILEILLNLKGIAVKLEGKDEVTLSLTKSGTGPVTAGDITHGDEVEIVNPEHVICHLTGANAEISMRLKVQRGRGYVPASARVHNDDEERPIGRLLLDSAFSPIVRIAYNVEAARVEQRTDLDKLVIDMETNGTLDPEEAIRRSATILAEQLEAFVDLRDVSVPEKKEEKPEFDPILLRPVDDLELTVRSANCLKAEAIHYIGDLVQRTEVELLKTPNLGKKSLTEIKDVLASRGLSLGMRLENWPPASIADE</sequence>
<name>RPOA_AERS4</name>
<gene>
    <name evidence="1" type="primary">rpoA</name>
    <name type="ordered locus">ASA_4062</name>
</gene>
<comment type="function">
    <text evidence="1">DNA-dependent RNA polymerase catalyzes the transcription of DNA into RNA using the four ribonucleoside triphosphates as substrates.</text>
</comment>
<comment type="catalytic activity">
    <reaction evidence="1">
        <text>RNA(n) + a ribonucleoside 5'-triphosphate = RNA(n+1) + diphosphate</text>
        <dbReference type="Rhea" id="RHEA:21248"/>
        <dbReference type="Rhea" id="RHEA-COMP:14527"/>
        <dbReference type="Rhea" id="RHEA-COMP:17342"/>
        <dbReference type="ChEBI" id="CHEBI:33019"/>
        <dbReference type="ChEBI" id="CHEBI:61557"/>
        <dbReference type="ChEBI" id="CHEBI:140395"/>
        <dbReference type="EC" id="2.7.7.6"/>
    </reaction>
</comment>
<comment type="subunit">
    <text evidence="1">Homodimer. The RNAP catalytic core consists of 2 alpha, 1 beta, 1 beta' and 1 omega subunit. When a sigma factor is associated with the core the holoenzyme is formed, which can initiate transcription.</text>
</comment>
<comment type="domain">
    <text evidence="1">The N-terminal domain is essential for RNAP assembly and basal transcription, whereas the C-terminal domain is involved in interaction with transcriptional regulators and with upstream promoter elements.</text>
</comment>
<comment type="similarity">
    <text evidence="1">Belongs to the RNA polymerase alpha chain family.</text>
</comment>
<protein>
    <recommendedName>
        <fullName evidence="1">DNA-directed RNA polymerase subunit alpha</fullName>
        <shortName evidence="1">RNAP subunit alpha</shortName>
        <ecNumber evidence="1">2.7.7.6</ecNumber>
    </recommendedName>
    <alternativeName>
        <fullName evidence="1">RNA polymerase subunit alpha</fullName>
    </alternativeName>
    <alternativeName>
        <fullName evidence="1">Transcriptase subunit alpha</fullName>
    </alternativeName>
</protein>